<evidence type="ECO:0000255" key="1">
    <source>
        <dbReference type="HAMAP-Rule" id="MF_00295"/>
    </source>
</evidence>
<accession>Q9CEC5</accession>
<organism>
    <name type="scientific">Lactococcus lactis subsp. lactis (strain IL1403)</name>
    <name type="common">Streptococcus lactis</name>
    <dbReference type="NCBI Taxonomy" id="272623"/>
    <lineage>
        <taxon>Bacteria</taxon>
        <taxon>Bacillati</taxon>
        <taxon>Bacillota</taxon>
        <taxon>Bacilli</taxon>
        <taxon>Lactobacillales</taxon>
        <taxon>Streptococcaceae</taxon>
        <taxon>Lactococcus</taxon>
    </lineage>
</organism>
<comment type="function">
    <text evidence="1">Transfers an acetyl group from acetyl-CoA to L-homoserine, forming acetyl-L-homoserine.</text>
</comment>
<comment type="catalytic activity">
    <reaction evidence="1">
        <text>L-homoserine + acetyl-CoA = O-acetyl-L-homoserine + CoA</text>
        <dbReference type="Rhea" id="RHEA:13701"/>
        <dbReference type="ChEBI" id="CHEBI:57287"/>
        <dbReference type="ChEBI" id="CHEBI:57288"/>
        <dbReference type="ChEBI" id="CHEBI:57476"/>
        <dbReference type="ChEBI" id="CHEBI:57716"/>
        <dbReference type="EC" id="2.3.1.31"/>
    </reaction>
</comment>
<comment type="pathway">
    <text evidence="1">Amino-acid biosynthesis; L-methionine biosynthesis via de novo pathway; O-acetyl-L-homoserine from L-homoserine: step 1/1.</text>
</comment>
<comment type="subcellular location">
    <subcellularLocation>
        <location evidence="1">Cytoplasm</location>
    </subcellularLocation>
</comment>
<comment type="similarity">
    <text evidence="1">Belongs to the MetA family.</text>
</comment>
<gene>
    <name evidence="1" type="primary">metAA</name>
    <name type="synonym">metA</name>
    <name type="ordered locus">LL1918</name>
    <name type="ORF">L0101</name>
</gene>
<keyword id="KW-0012">Acyltransferase</keyword>
<keyword id="KW-0028">Amino-acid biosynthesis</keyword>
<keyword id="KW-0963">Cytoplasm</keyword>
<keyword id="KW-0486">Methionine biosynthesis</keyword>
<keyword id="KW-1185">Reference proteome</keyword>
<keyword id="KW-0808">Transferase</keyword>
<reference key="1">
    <citation type="journal article" date="2001" name="Genome Res.">
        <title>The complete genome sequence of the lactic acid bacterium Lactococcus lactis ssp. lactis IL1403.</title>
        <authorList>
            <person name="Bolotin A."/>
            <person name="Wincker P."/>
            <person name="Mauger S."/>
            <person name="Jaillon O."/>
            <person name="Malarme K."/>
            <person name="Weissenbach J."/>
            <person name="Ehrlich S.D."/>
            <person name="Sorokin A."/>
        </authorList>
    </citation>
    <scope>NUCLEOTIDE SEQUENCE [LARGE SCALE GENOMIC DNA]</scope>
    <source>
        <strain>IL1403</strain>
    </source>
</reference>
<proteinExistence type="inferred from homology"/>
<feature type="chain" id="PRO_0000199752" description="Homoserine O-acetyltransferase">
    <location>
        <begin position="1"/>
        <end position="321"/>
    </location>
</feature>
<feature type="active site" description="Acyl-thioester intermediate" evidence="1">
    <location>
        <position position="142"/>
    </location>
</feature>
<feature type="active site" description="Proton acceptor" evidence="1">
    <location>
        <position position="235"/>
    </location>
</feature>
<feature type="active site" evidence="1">
    <location>
        <position position="237"/>
    </location>
</feature>
<feature type="binding site" evidence="1">
    <location>
        <position position="163"/>
    </location>
    <ligand>
        <name>substrate</name>
    </ligand>
</feature>
<feature type="binding site" evidence="1">
    <location>
        <position position="192"/>
    </location>
    <ligand>
        <name>substrate</name>
    </ligand>
</feature>
<feature type="binding site" evidence="1">
    <location>
        <position position="249"/>
    </location>
    <ligand>
        <name>substrate</name>
    </ligand>
</feature>
<feature type="site" description="Important for acyl-CoA specificity" evidence="1">
    <location>
        <position position="111"/>
    </location>
</feature>
<feature type="site" description="Important for substrate specificity" evidence="1">
    <location>
        <position position="192"/>
    </location>
</feature>
<dbReference type="EC" id="2.3.1.31" evidence="1"/>
<dbReference type="EMBL" id="AE005176">
    <property type="protein sequence ID" value="AAK06016.1"/>
    <property type="molecule type" value="Genomic_DNA"/>
</dbReference>
<dbReference type="PIR" id="F86864">
    <property type="entry name" value="F86864"/>
</dbReference>
<dbReference type="RefSeq" id="NP_268075.1">
    <property type="nucleotide sequence ID" value="NC_002662.1"/>
</dbReference>
<dbReference type="RefSeq" id="WP_004254910.1">
    <property type="nucleotide sequence ID" value="NC_002662.1"/>
</dbReference>
<dbReference type="SMR" id="Q9CEC5"/>
<dbReference type="PaxDb" id="272623-L0101"/>
<dbReference type="EnsemblBacteria" id="AAK06016">
    <property type="protein sequence ID" value="AAK06016"/>
    <property type="gene ID" value="L0101"/>
</dbReference>
<dbReference type="KEGG" id="lla:L0101"/>
<dbReference type="PATRIC" id="fig|272623.7.peg.2060"/>
<dbReference type="eggNOG" id="COG1897">
    <property type="taxonomic scope" value="Bacteria"/>
</dbReference>
<dbReference type="HOGENOM" id="CLU_057851_0_1_9"/>
<dbReference type="OrthoDB" id="9772423at2"/>
<dbReference type="UniPathway" id="UPA00051">
    <property type="reaction ID" value="UER00074"/>
</dbReference>
<dbReference type="Proteomes" id="UP000002196">
    <property type="component" value="Chromosome"/>
</dbReference>
<dbReference type="GO" id="GO:0005737">
    <property type="term" value="C:cytoplasm"/>
    <property type="evidence" value="ECO:0007669"/>
    <property type="project" value="UniProtKB-SubCell"/>
</dbReference>
<dbReference type="GO" id="GO:0004414">
    <property type="term" value="F:homoserine O-acetyltransferase activity"/>
    <property type="evidence" value="ECO:0007669"/>
    <property type="project" value="UniProtKB-EC"/>
</dbReference>
<dbReference type="GO" id="GO:0008899">
    <property type="term" value="F:homoserine O-succinyltransferase activity"/>
    <property type="evidence" value="ECO:0007669"/>
    <property type="project" value="UniProtKB-UniRule"/>
</dbReference>
<dbReference type="GO" id="GO:0019281">
    <property type="term" value="P:L-methionine biosynthetic process from homoserine via O-succinyl-L-homoserine and cystathionine"/>
    <property type="evidence" value="ECO:0007669"/>
    <property type="project" value="InterPro"/>
</dbReference>
<dbReference type="CDD" id="cd03131">
    <property type="entry name" value="GATase1_HTS"/>
    <property type="match status" value="1"/>
</dbReference>
<dbReference type="Gene3D" id="3.40.50.880">
    <property type="match status" value="1"/>
</dbReference>
<dbReference type="HAMAP" id="MF_00295">
    <property type="entry name" value="MetA_acyltransf"/>
    <property type="match status" value="1"/>
</dbReference>
<dbReference type="InterPro" id="IPR029062">
    <property type="entry name" value="Class_I_gatase-like"/>
</dbReference>
<dbReference type="InterPro" id="IPR005697">
    <property type="entry name" value="HST_MetA"/>
</dbReference>
<dbReference type="InterPro" id="IPR033752">
    <property type="entry name" value="MetA_family"/>
</dbReference>
<dbReference type="NCBIfam" id="TIGR01001">
    <property type="entry name" value="metA"/>
    <property type="match status" value="1"/>
</dbReference>
<dbReference type="PANTHER" id="PTHR20919">
    <property type="entry name" value="HOMOSERINE O-SUCCINYLTRANSFERASE"/>
    <property type="match status" value="1"/>
</dbReference>
<dbReference type="PANTHER" id="PTHR20919:SF0">
    <property type="entry name" value="HOMOSERINE O-SUCCINYLTRANSFERASE"/>
    <property type="match status" value="1"/>
</dbReference>
<dbReference type="Pfam" id="PF04204">
    <property type="entry name" value="HTS"/>
    <property type="match status" value="1"/>
</dbReference>
<dbReference type="PIRSF" id="PIRSF000450">
    <property type="entry name" value="H_ser_succinyltr"/>
    <property type="match status" value="1"/>
</dbReference>
<dbReference type="SUPFAM" id="SSF52317">
    <property type="entry name" value="Class I glutamine amidotransferase-like"/>
    <property type="match status" value="1"/>
</dbReference>
<sequence length="321" mass="37529">MPVKVIEGLPAIDDLRADNIFVMNDERAKNQNIRPLNLLVVNLMPRKLITERQILRLLSNTPLQINVEFLYMTSHDFKNTKQGHLDSFYKSFSEIKSQYYDGLIVTGAPVEQLNFEEVDYWSELLKIIDWSKSHVYSSLHICWGAQAALYARYGVTKENLPQKLCGIYKSSVEQPKNPLFRGFDDFFNYPQSRYTQSNPSEIKKVPDLEVLSSSKETGFSILAKKNLREIYLFGHLEYDRETLAWEYERDKEEGLKPNLPQNYFPENDDKNKPKSTWASAASLFFSNWLNYAVYQGTPYLGERLSQHLNEENYDFNQKEQK</sequence>
<name>METAA_LACLA</name>
<protein>
    <recommendedName>
        <fullName evidence="1">Homoserine O-acetyltransferase</fullName>
        <shortName evidence="1">HAT</shortName>
        <ecNumber evidence="1">2.3.1.31</ecNumber>
    </recommendedName>
    <alternativeName>
        <fullName evidence="1">Homoserine transacetylase</fullName>
        <shortName evidence="1">HTA</shortName>
    </alternativeName>
</protein>